<reference key="1">
    <citation type="journal article" date="2011" name="Nature">
        <title>A high-resolution map of human evolutionary constraint using 29 mammals.</title>
        <authorList>
            <person name="Lindblad-Toh K."/>
            <person name="Garber M."/>
            <person name="Zuk O."/>
            <person name="Lin M.F."/>
            <person name="Parker B.J."/>
            <person name="Washietl S."/>
            <person name="Kheradpour P."/>
            <person name="Ernst J."/>
            <person name="Jordan G."/>
            <person name="Mauceli E."/>
            <person name="Ward L.D."/>
            <person name="Lowe C.B."/>
            <person name="Holloway A.K."/>
            <person name="Clamp M."/>
            <person name="Gnerre S."/>
            <person name="Alfoldi J."/>
            <person name="Beal K."/>
            <person name="Chang J."/>
            <person name="Clawson H."/>
            <person name="Cuff J."/>
            <person name="Di Palma F."/>
            <person name="Fitzgerald S."/>
            <person name="Flicek P."/>
            <person name="Guttman M."/>
            <person name="Hubisz M.J."/>
            <person name="Jaffe D.B."/>
            <person name="Jungreis I."/>
            <person name="Kent W.J."/>
            <person name="Kostka D."/>
            <person name="Lara M."/>
            <person name="Martins A.L."/>
            <person name="Massingham T."/>
            <person name="Moltke I."/>
            <person name="Raney B.J."/>
            <person name="Rasmussen M.D."/>
            <person name="Robinson J."/>
            <person name="Stark A."/>
            <person name="Vilella A.J."/>
            <person name="Wen J."/>
            <person name="Xie X."/>
            <person name="Zody M.C."/>
            <person name="Baldwin J."/>
            <person name="Bloom T."/>
            <person name="Chin C.W."/>
            <person name="Heiman D."/>
            <person name="Nicol R."/>
            <person name="Nusbaum C."/>
            <person name="Young S."/>
            <person name="Wilkinson J."/>
            <person name="Worley K.C."/>
            <person name="Kovar C.L."/>
            <person name="Muzny D.M."/>
            <person name="Gibbs R.A."/>
            <person name="Cree A."/>
            <person name="Dihn H.H."/>
            <person name="Fowler G."/>
            <person name="Jhangiani S."/>
            <person name="Joshi V."/>
            <person name="Lee S."/>
            <person name="Lewis L.R."/>
            <person name="Nazareth L.V."/>
            <person name="Okwuonu G."/>
            <person name="Santibanez J."/>
            <person name="Warren W.C."/>
            <person name="Mardis E.R."/>
            <person name="Weinstock G.M."/>
            <person name="Wilson R.K."/>
            <person name="Delehaunty K."/>
            <person name="Dooling D."/>
            <person name="Fronik C."/>
            <person name="Fulton L."/>
            <person name="Fulton B."/>
            <person name="Graves T."/>
            <person name="Minx P."/>
            <person name="Sodergren E."/>
            <person name="Birney E."/>
            <person name="Margulies E.H."/>
            <person name="Herrero J."/>
            <person name="Green E.D."/>
            <person name="Haussler D."/>
            <person name="Siepel A."/>
            <person name="Goldman N."/>
            <person name="Pollard K.S."/>
            <person name="Pedersen J.S."/>
            <person name="Lander E.S."/>
            <person name="Kellis M."/>
        </authorList>
    </citation>
    <scope>NUCLEOTIDE SEQUENCE [LARGE SCALE GENOMIC DNA]</scope>
    <source>
        <strain>Thorbecke</strain>
    </source>
</reference>
<sequence length="160" mass="18697">MQPASAKWYDRRDYVFIEFCVEDSKDVNVNFEKSKLTFSCLGGSDNFKHLNEIDLFHCIDPNDSKHKRTDRSILCCLRKGESGQSWPRLTKERAKLNWLSVDFNNWKDWEDDSDEDMSNFDRFSEMMNNMGGDEDVDLPEVDGADDDSQDSDDEKMPDLE</sequence>
<organism>
    <name type="scientific">Oryctolagus cuniculus</name>
    <name type="common">Rabbit</name>
    <dbReference type="NCBI Taxonomy" id="9986"/>
    <lineage>
        <taxon>Eukaryota</taxon>
        <taxon>Metazoa</taxon>
        <taxon>Chordata</taxon>
        <taxon>Craniata</taxon>
        <taxon>Vertebrata</taxon>
        <taxon>Euteleostomi</taxon>
        <taxon>Mammalia</taxon>
        <taxon>Eutheria</taxon>
        <taxon>Euarchontoglires</taxon>
        <taxon>Glires</taxon>
        <taxon>Lagomorpha</taxon>
        <taxon>Leporidae</taxon>
        <taxon>Oryctolagus</taxon>
    </lineage>
</organism>
<name>TEBP_RABIT</name>
<gene>
    <name type="primary">PTGES3</name>
</gene>
<feature type="chain" id="PRO_0000439002" description="Prostaglandin E synthase 3">
    <location>
        <begin position="1"/>
        <end position="160"/>
    </location>
</feature>
<feature type="domain" description="CS" evidence="4">
    <location>
        <begin position="1"/>
        <end position="90"/>
    </location>
</feature>
<feature type="region of interest" description="Disordered" evidence="5">
    <location>
        <begin position="124"/>
        <end position="160"/>
    </location>
</feature>
<feature type="short sequence motif" description="PXLE motif" evidence="1">
    <location>
        <begin position="157"/>
        <end position="160"/>
    </location>
</feature>
<feature type="compositionally biased region" description="Acidic residues" evidence="5">
    <location>
        <begin position="132"/>
        <end position="153"/>
    </location>
</feature>
<feature type="site" description="Cleavage; by caspase-7" evidence="1">
    <location>
        <begin position="142"/>
        <end position="143"/>
    </location>
</feature>
<feature type="modified residue" description="N6-acetyllysine" evidence="1">
    <location>
        <position position="33"/>
    </location>
</feature>
<feature type="modified residue" description="Phosphoserine" evidence="1">
    <location>
        <position position="44"/>
    </location>
</feature>
<feature type="modified residue" description="Phosphoserine" evidence="1">
    <location>
        <position position="85"/>
    </location>
</feature>
<feature type="modified residue" description="Phosphoserine" evidence="3">
    <location>
        <position position="100"/>
    </location>
</feature>
<feature type="modified residue" description="Phosphoserine" evidence="1">
    <location>
        <position position="113"/>
    </location>
</feature>
<feature type="modified residue" description="Phosphoserine" evidence="1">
    <location>
        <position position="118"/>
    </location>
</feature>
<feature type="modified residue" description="Phosphoserine" evidence="1">
    <location>
        <position position="148"/>
    </location>
</feature>
<feature type="modified residue" description="Phosphoserine" evidence="1">
    <location>
        <position position="151"/>
    </location>
</feature>
<feature type="cross-link" description="Glycyl lysine isopeptide (Lys-Gly) (interchain with G-Cter in SUMO2)" evidence="1">
    <location>
        <position position="35"/>
    </location>
</feature>
<feature type="cross-link" description="Glycyl lysine isopeptide (Lys-Gly) (interchain with G-Cter in SUMO2)" evidence="1">
    <location>
        <position position="65"/>
    </location>
</feature>
<feature type="sequence conflict" description="In Ref. 1; AAGW02029977." evidence="6" ref="1">
    <original>R</original>
    <variation>G</variation>
    <location>
        <position position="11"/>
    </location>
</feature>
<feature type="sequence conflict" description="In Ref. 1; AAGW02026473." evidence="6" ref="1">
    <original>SDN</original>
    <variation>RDH</variation>
    <location>
        <begin position="44"/>
        <end position="46"/>
    </location>
</feature>
<feature type="sequence conflict" description="In Ref. 1; AAGW02029977." evidence="6" ref="1">
    <original>H</original>
    <variation>N</variation>
    <location>
        <position position="49"/>
    </location>
</feature>
<feature type="sequence conflict" description="In Ref. 1; AAGW02029977." evidence="6" ref="1">
    <original>G</original>
    <variation>D</variation>
    <location>
        <position position="83"/>
    </location>
</feature>
<feature type="sequence conflict" description="In Ref. 1; AAGW02026473." evidence="6" ref="1">
    <original>E</original>
    <variation>Q</variation>
    <location>
        <position position="92"/>
    </location>
</feature>
<feature type="sequence conflict" description="In Ref. 1; AAGW02026473." evidence="6" ref="1">
    <original>N</original>
    <variation>S</variation>
    <location>
        <position position="104"/>
    </location>
</feature>
<feature type="sequence conflict" description="In Ref. 1; AAGW02026473." evidence="6" ref="1">
    <original>D</original>
    <variation>Y</variation>
    <location>
        <position position="158"/>
    </location>
</feature>
<accession>G1TGF1</accession>
<accession>G1SS21</accession>
<accession>G1U859</accession>
<proteinExistence type="inferred from homology"/>
<keyword id="KW-0007">Acetylation</keyword>
<keyword id="KW-0963">Cytoplasm</keyword>
<keyword id="KW-0275">Fatty acid biosynthesis</keyword>
<keyword id="KW-0276">Fatty acid metabolism</keyword>
<keyword id="KW-0413">Isomerase</keyword>
<keyword id="KW-1017">Isopeptide bond</keyword>
<keyword id="KW-0444">Lipid biosynthesis</keyword>
<keyword id="KW-0443">Lipid metabolism</keyword>
<keyword id="KW-0597">Phosphoprotein</keyword>
<keyword id="KW-0643">Prostaglandin biosynthesis</keyword>
<keyword id="KW-0644">Prostaglandin metabolism</keyword>
<keyword id="KW-1185">Reference proteome</keyword>
<keyword id="KW-0832">Ubl conjugation</keyword>
<evidence type="ECO:0000250" key="1">
    <source>
        <dbReference type="UniProtKB" id="Q15185"/>
    </source>
</evidence>
<evidence type="ECO:0000250" key="2">
    <source>
        <dbReference type="UniProtKB" id="Q3ZBF7"/>
    </source>
</evidence>
<evidence type="ECO:0000250" key="3">
    <source>
        <dbReference type="UniProtKB" id="Q9R0Q7"/>
    </source>
</evidence>
<evidence type="ECO:0000255" key="4">
    <source>
        <dbReference type="PROSITE-ProRule" id="PRU00547"/>
    </source>
</evidence>
<evidence type="ECO:0000256" key="5">
    <source>
        <dbReference type="SAM" id="MobiDB-lite"/>
    </source>
</evidence>
<evidence type="ECO:0000305" key="6"/>
<comment type="function">
    <text evidence="1">Cytosolic prostaglandin synthase that catalyzes the oxidoreduction of prostaglandin endoperoxide H2 (PGH2) to prostaglandin E2 (PGE2). Molecular chaperone that localizes to genomic response elements in a hormone-dependent manner and disrupts receptor-mediated transcriptional activation, by promoting disassembly of transcriptional regulatory complexes. Facilitates HIF alpha proteins hydroxylation via interaction with EGLN1/PHD2, leading to recruit EGLN1/PHD2 to the HSP90 pathway.</text>
</comment>
<comment type="catalytic activity">
    <reaction evidence="1">
        <text>prostaglandin H2 = prostaglandin E2</text>
        <dbReference type="Rhea" id="RHEA:12893"/>
        <dbReference type="ChEBI" id="CHEBI:57405"/>
        <dbReference type="ChEBI" id="CHEBI:606564"/>
        <dbReference type="EC" id="5.3.99.3"/>
    </reaction>
</comment>
<comment type="pathway">
    <text evidence="1">Lipid metabolism; prostaglandin biosynthesis.</text>
</comment>
<comment type="subunit">
    <text evidence="1">Probably forms a complex composed of chaperones HSP90 and HSP70, co-chaperones STIP1/HOP, CDC37, PPP5C, PTGES3/p23, TSC1 and client protein TSC2. Binds to the progesterone receptor. Interacts with TERT; the interaction, together with HSP90AA1, is required for correct assembly and stabilization of the telomerase holoenzyme complex. Interacts (via PXLE motif) with EGLN1/PHD2, recruiting EGLN1/PHD2 to the HSP90 pathway to facilitate HIF alpha proteins hydroxylation. Interacts with HSP90AA1, FLCN, FNIP1 and FNIP2.</text>
</comment>
<comment type="subcellular location">
    <subcellularLocation>
        <location evidence="2">Cytoplasm</location>
    </subcellularLocation>
</comment>
<comment type="PTM">
    <text evidence="1">Proteolytically cleaved by caspase-7 (CASP7) in response to apoptosis, leading to its inactivation.</text>
</comment>
<comment type="similarity">
    <text evidence="6">Belongs to the p23/wos2 family.</text>
</comment>
<dbReference type="EC" id="5.3.99.3"/>
<dbReference type="EMBL" id="AAGW02027274">
    <property type="status" value="NOT_ANNOTATED_CDS"/>
    <property type="molecule type" value="Genomic_DNA"/>
</dbReference>
<dbReference type="EMBL" id="AAGW02029977">
    <property type="status" value="NOT_ANNOTATED_CDS"/>
    <property type="molecule type" value="Genomic_DNA"/>
</dbReference>
<dbReference type="EMBL" id="AAGW02026473">
    <property type="status" value="NOT_ANNOTATED_CDS"/>
    <property type="molecule type" value="Genomic_DNA"/>
</dbReference>
<dbReference type="RefSeq" id="XP_002711223.2">
    <property type="nucleotide sequence ID" value="XM_002711177.3"/>
</dbReference>
<dbReference type="RefSeq" id="XP_002718103.1">
    <property type="nucleotide sequence ID" value="XM_002718057.3"/>
</dbReference>
<dbReference type="RefSeq" id="XP_069908519.1">
    <property type="nucleotide sequence ID" value="XM_070052418.1"/>
</dbReference>
<dbReference type="SMR" id="G1TGF1"/>
<dbReference type="FunCoup" id="G1TGF1">
    <property type="interactions" value="2320"/>
</dbReference>
<dbReference type="STRING" id="9986.ENSOCUP00000029851"/>
<dbReference type="PaxDb" id="9986-ENSOCUP00000021652"/>
<dbReference type="Ensembl" id="ENSOCUT00000045086.1">
    <property type="protein sequence ID" value="ENSOCUP00000029851.1"/>
    <property type="gene ID" value="ENSOCUG00000035555.1"/>
</dbReference>
<dbReference type="GeneID" id="127491155"/>
<dbReference type="KEGG" id="ocu:100351480"/>
<dbReference type="KEGG" id="ocu:100355572"/>
<dbReference type="eggNOG" id="KOG3158">
    <property type="taxonomic scope" value="Eukaryota"/>
</dbReference>
<dbReference type="GeneTree" id="ENSGT00940000154256"/>
<dbReference type="HOGENOM" id="CLU_078883_1_2_1"/>
<dbReference type="InParanoid" id="G1TGF1"/>
<dbReference type="OMA" id="IEHKVTD"/>
<dbReference type="OrthoDB" id="1564555at2759"/>
<dbReference type="TreeFam" id="TF315077"/>
<dbReference type="UniPathway" id="UPA00662"/>
<dbReference type="Proteomes" id="UP000001811">
    <property type="component" value="Chromosome 4"/>
</dbReference>
<dbReference type="Bgee" id="ENSOCUG00000035555">
    <property type="expression patterns" value="Expressed in autopod skin and 14 other cell types or tissues"/>
</dbReference>
<dbReference type="GO" id="GO:0005829">
    <property type="term" value="C:cytosol"/>
    <property type="evidence" value="ECO:0007669"/>
    <property type="project" value="TreeGrafter"/>
</dbReference>
<dbReference type="GO" id="GO:0005634">
    <property type="term" value="C:nucleus"/>
    <property type="evidence" value="ECO:0007669"/>
    <property type="project" value="TreeGrafter"/>
</dbReference>
<dbReference type="GO" id="GO:0070182">
    <property type="term" value="F:DNA polymerase binding"/>
    <property type="evidence" value="ECO:0000353"/>
    <property type="project" value="BHF-UCL"/>
</dbReference>
<dbReference type="GO" id="GO:0051879">
    <property type="term" value="F:Hsp90 protein binding"/>
    <property type="evidence" value="ECO:0007669"/>
    <property type="project" value="InterPro"/>
</dbReference>
<dbReference type="GO" id="GO:0050220">
    <property type="term" value="F:prostaglandin-E synthase activity"/>
    <property type="evidence" value="ECO:0007669"/>
    <property type="project" value="UniProtKB-EC"/>
</dbReference>
<dbReference type="GO" id="GO:0051087">
    <property type="term" value="F:protein-folding chaperone binding"/>
    <property type="evidence" value="ECO:0007669"/>
    <property type="project" value="TreeGrafter"/>
</dbReference>
<dbReference type="GO" id="GO:0051131">
    <property type="term" value="P:chaperone-mediated protein complex assembly"/>
    <property type="evidence" value="ECO:0007669"/>
    <property type="project" value="TreeGrafter"/>
</dbReference>
<dbReference type="GO" id="GO:0001516">
    <property type="term" value="P:prostaglandin biosynthetic process"/>
    <property type="evidence" value="ECO:0007669"/>
    <property type="project" value="UniProtKB-UniPathway"/>
</dbReference>
<dbReference type="GO" id="GO:0006457">
    <property type="term" value="P:protein folding"/>
    <property type="evidence" value="ECO:0007669"/>
    <property type="project" value="TreeGrafter"/>
</dbReference>
<dbReference type="GO" id="GO:1905323">
    <property type="term" value="P:telomerase holoenzyme complex assembly"/>
    <property type="evidence" value="ECO:0000314"/>
    <property type="project" value="BHF-UCL"/>
</dbReference>
<dbReference type="GO" id="GO:0007004">
    <property type="term" value="P:telomere maintenance via telomerase"/>
    <property type="evidence" value="ECO:0000314"/>
    <property type="project" value="BHF-UCL"/>
</dbReference>
<dbReference type="CDD" id="cd00237">
    <property type="entry name" value="p23"/>
    <property type="match status" value="1"/>
</dbReference>
<dbReference type="FunFam" id="2.60.40.790:FF:000003">
    <property type="entry name" value="prostaglandin E synthase 3"/>
    <property type="match status" value="1"/>
</dbReference>
<dbReference type="Gene3D" id="2.60.40.790">
    <property type="match status" value="1"/>
</dbReference>
<dbReference type="InterPro" id="IPR007052">
    <property type="entry name" value="CS_dom"/>
</dbReference>
<dbReference type="InterPro" id="IPR008978">
    <property type="entry name" value="HSP20-like_chaperone"/>
</dbReference>
<dbReference type="InterPro" id="IPR045250">
    <property type="entry name" value="p23-like"/>
</dbReference>
<dbReference type="PANTHER" id="PTHR22932:SF3">
    <property type="entry name" value="PROSTAGLANDIN E SYNTHASE 3"/>
    <property type="match status" value="1"/>
</dbReference>
<dbReference type="PANTHER" id="PTHR22932">
    <property type="entry name" value="TELOMERASE-BINDING PROTEIN P23 HSP90 CO-CHAPERONE"/>
    <property type="match status" value="1"/>
</dbReference>
<dbReference type="Pfam" id="PF04969">
    <property type="entry name" value="CS"/>
    <property type="match status" value="1"/>
</dbReference>
<dbReference type="SUPFAM" id="SSF49764">
    <property type="entry name" value="HSP20-like chaperones"/>
    <property type="match status" value="1"/>
</dbReference>
<dbReference type="PROSITE" id="PS51203">
    <property type="entry name" value="CS"/>
    <property type="match status" value="1"/>
</dbReference>
<protein>
    <recommendedName>
        <fullName>Prostaglandin E synthase 3</fullName>
        <ecNumber>5.3.99.3</ecNumber>
    </recommendedName>
    <alternativeName>
        <fullName>Cytosolic prostaglandin E2 synthase</fullName>
        <shortName>cPGES</shortName>
    </alternativeName>
</protein>